<name>SYY_DESAL</name>
<organism>
    <name type="scientific">Desulfatibacillum aliphaticivorans</name>
    <dbReference type="NCBI Taxonomy" id="218208"/>
    <lineage>
        <taxon>Bacteria</taxon>
        <taxon>Pseudomonadati</taxon>
        <taxon>Thermodesulfobacteriota</taxon>
        <taxon>Desulfobacteria</taxon>
        <taxon>Desulfobacterales</taxon>
        <taxon>Desulfatibacillaceae</taxon>
        <taxon>Desulfatibacillum</taxon>
    </lineage>
</organism>
<feature type="chain" id="PRO_1000189285" description="Tyrosine--tRNA ligase">
    <location>
        <begin position="1"/>
        <end position="430"/>
    </location>
</feature>
<feature type="domain" description="S4 RNA-binding" evidence="1">
    <location>
        <begin position="362"/>
        <end position="427"/>
    </location>
</feature>
<feature type="short sequence motif" description="'HIGH' region">
    <location>
        <begin position="41"/>
        <end position="50"/>
    </location>
</feature>
<feature type="short sequence motif" description="'KMSKS' region">
    <location>
        <begin position="230"/>
        <end position="234"/>
    </location>
</feature>
<feature type="binding site" evidence="1">
    <location>
        <position position="36"/>
    </location>
    <ligand>
        <name>L-tyrosine</name>
        <dbReference type="ChEBI" id="CHEBI:58315"/>
    </ligand>
</feature>
<feature type="binding site" evidence="1">
    <location>
        <position position="170"/>
    </location>
    <ligand>
        <name>L-tyrosine</name>
        <dbReference type="ChEBI" id="CHEBI:58315"/>
    </ligand>
</feature>
<feature type="binding site" evidence="1">
    <location>
        <position position="174"/>
    </location>
    <ligand>
        <name>L-tyrosine</name>
        <dbReference type="ChEBI" id="CHEBI:58315"/>
    </ligand>
</feature>
<feature type="binding site" evidence="1">
    <location>
        <position position="233"/>
    </location>
    <ligand>
        <name>ATP</name>
        <dbReference type="ChEBI" id="CHEBI:30616"/>
    </ligand>
</feature>
<comment type="function">
    <text evidence="1">Catalyzes the attachment of tyrosine to tRNA(Tyr) in a two-step reaction: tyrosine is first activated by ATP to form Tyr-AMP and then transferred to the acceptor end of tRNA(Tyr).</text>
</comment>
<comment type="catalytic activity">
    <reaction evidence="1">
        <text>tRNA(Tyr) + L-tyrosine + ATP = L-tyrosyl-tRNA(Tyr) + AMP + diphosphate + H(+)</text>
        <dbReference type="Rhea" id="RHEA:10220"/>
        <dbReference type="Rhea" id="RHEA-COMP:9706"/>
        <dbReference type="Rhea" id="RHEA-COMP:9707"/>
        <dbReference type="ChEBI" id="CHEBI:15378"/>
        <dbReference type="ChEBI" id="CHEBI:30616"/>
        <dbReference type="ChEBI" id="CHEBI:33019"/>
        <dbReference type="ChEBI" id="CHEBI:58315"/>
        <dbReference type="ChEBI" id="CHEBI:78442"/>
        <dbReference type="ChEBI" id="CHEBI:78536"/>
        <dbReference type="ChEBI" id="CHEBI:456215"/>
        <dbReference type="EC" id="6.1.1.1"/>
    </reaction>
</comment>
<comment type="subunit">
    <text evidence="1">Homodimer.</text>
</comment>
<comment type="subcellular location">
    <subcellularLocation>
        <location evidence="1">Cytoplasm</location>
    </subcellularLocation>
</comment>
<comment type="similarity">
    <text evidence="1">Belongs to the class-I aminoacyl-tRNA synthetase family. TyrS type 1 subfamily.</text>
</comment>
<sequence length="430" mass="47875">MKMNVLQTLKERGFIEQTTHDQELEDLLSGEQVSCYIGFDPTASSLHVGSLVPIMSLAHMQRAGHRPIALVGGGTGLVGDPSGKTEMRKLLTLEDVNNNAEGIRAQLARFIDFDKGAVQENNANWLVGLKYIEFLRDFGRHFSVNRMIKAESYRMRLESEEGLSFIEFNYMLLQAYDFLHLFNEYGCQLQMGGSDQWGNIVAGIDLIRRAKGGSAYGITFPLITTSAGIKMGKTHKGAVWLDPERTSPYEYFQFWVNTHDDDVPRFLALFTFLPMEQINKVKDLDGAELNLAKTILAFEATTLAHGRDQAVGALEAAYNMFGAREIPADLLADSSIPREGAAKAEDSVPTTVMEQARLQEGVPAFELFDEIGLCASRGAARRLLGQGGGYVNNERIDSFDYKISLVDMKDNEIILRAGKKNYHRLVLSEK</sequence>
<proteinExistence type="inferred from homology"/>
<reference key="1">
    <citation type="journal article" date="2012" name="Environ. Microbiol.">
        <title>The genome sequence of Desulfatibacillum alkenivorans AK-01: a blueprint for anaerobic alkane oxidation.</title>
        <authorList>
            <person name="Callaghan A.V."/>
            <person name="Morris B.E."/>
            <person name="Pereira I.A."/>
            <person name="McInerney M.J."/>
            <person name="Austin R.N."/>
            <person name="Groves J.T."/>
            <person name="Kukor J.J."/>
            <person name="Suflita J.M."/>
            <person name="Young L.Y."/>
            <person name="Zylstra G.J."/>
            <person name="Wawrik B."/>
        </authorList>
    </citation>
    <scope>NUCLEOTIDE SEQUENCE [LARGE SCALE GENOMIC DNA]</scope>
    <source>
        <strain>AK-01</strain>
    </source>
</reference>
<keyword id="KW-0030">Aminoacyl-tRNA synthetase</keyword>
<keyword id="KW-0067">ATP-binding</keyword>
<keyword id="KW-0963">Cytoplasm</keyword>
<keyword id="KW-0436">Ligase</keyword>
<keyword id="KW-0547">Nucleotide-binding</keyword>
<keyword id="KW-0648">Protein biosynthesis</keyword>
<keyword id="KW-1185">Reference proteome</keyword>
<keyword id="KW-0694">RNA-binding</keyword>
<dbReference type="EC" id="6.1.1.1" evidence="1"/>
<dbReference type="EMBL" id="CP001322">
    <property type="protein sequence ID" value="ACL05309.1"/>
    <property type="molecule type" value="Genomic_DNA"/>
</dbReference>
<dbReference type="SMR" id="B8FGS9"/>
<dbReference type="KEGG" id="dal:Dalk_3621"/>
<dbReference type="eggNOG" id="COG0162">
    <property type="taxonomic scope" value="Bacteria"/>
</dbReference>
<dbReference type="HOGENOM" id="CLU_024003_0_3_7"/>
<dbReference type="Proteomes" id="UP000000739">
    <property type="component" value="Chromosome"/>
</dbReference>
<dbReference type="GO" id="GO:0005829">
    <property type="term" value="C:cytosol"/>
    <property type="evidence" value="ECO:0007669"/>
    <property type="project" value="TreeGrafter"/>
</dbReference>
<dbReference type="GO" id="GO:0005524">
    <property type="term" value="F:ATP binding"/>
    <property type="evidence" value="ECO:0007669"/>
    <property type="project" value="UniProtKB-UniRule"/>
</dbReference>
<dbReference type="GO" id="GO:0003723">
    <property type="term" value="F:RNA binding"/>
    <property type="evidence" value="ECO:0007669"/>
    <property type="project" value="UniProtKB-KW"/>
</dbReference>
<dbReference type="GO" id="GO:0004831">
    <property type="term" value="F:tyrosine-tRNA ligase activity"/>
    <property type="evidence" value="ECO:0007669"/>
    <property type="project" value="UniProtKB-UniRule"/>
</dbReference>
<dbReference type="GO" id="GO:0006437">
    <property type="term" value="P:tyrosyl-tRNA aminoacylation"/>
    <property type="evidence" value="ECO:0007669"/>
    <property type="project" value="UniProtKB-UniRule"/>
</dbReference>
<dbReference type="CDD" id="cd00165">
    <property type="entry name" value="S4"/>
    <property type="match status" value="1"/>
</dbReference>
<dbReference type="CDD" id="cd00805">
    <property type="entry name" value="TyrRS_core"/>
    <property type="match status" value="1"/>
</dbReference>
<dbReference type="FunFam" id="1.10.240.10:FF:000001">
    <property type="entry name" value="Tyrosine--tRNA ligase"/>
    <property type="match status" value="1"/>
</dbReference>
<dbReference type="FunFam" id="3.40.50.620:FF:000008">
    <property type="entry name" value="Tyrosine--tRNA ligase"/>
    <property type="match status" value="1"/>
</dbReference>
<dbReference type="Gene3D" id="3.40.50.620">
    <property type="entry name" value="HUPs"/>
    <property type="match status" value="1"/>
</dbReference>
<dbReference type="Gene3D" id="3.10.290.10">
    <property type="entry name" value="RNA-binding S4 domain"/>
    <property type="match status" value="1"/>
</dbReference>
<dbReference type="Gene3D" id="1.10.240.10">
    <property type="entry name" value="Tyrosyl-Transfer RNA Synthetase"/>
    <property type="match status" value="1"/>
</dbReference>
<dbReference type="HAMAP" id="MF_02006">
    <property type="entry name" value="Tyr_tRNA_synth_type1"/>
    <property type="match status" value="1"/>
</dbReference>
<dbReference type="InterPro" id="IPR002305">
    <property type="entry name" value="aa-tRNA-synth_Ic"/>
</dbReference>
<dbReference type="InterPro" id="IPR014729">
    <property type="entry name" value="Rossmann-like_a/b/a_fold"/>
</dbReference>
<dbReference type="InterPro" id="IPR036986">
    <property type="entry name" value="S4_RNA-bd_sf"/>
</dbReference>
<dbReference type="InterPro" id="IPR054608">
    <property type="entry name" value="SYY-like_C"/>
</dbReference>
<dbReference type="InterPro" id="IPR002307">
    <property type="entry name" value="Tyr-tRNA-ligase"/>
</dbReference>
<dbReference type="InterPro" id="IPR024088">
    <property type="entry name" value="Tyr-tRNA-ligase_bac-type"/>
</dbReference>
<dbReference type="InterPro" id="IPR024107">
    <property type="entry name" value="Tyr-tRNA-ligase_bac_1"/>
</dbReference>
<dbReference type="NCBIfam" id="TIGR00234">
    <property type="entry name" value="tyrS"/>
    <property type="match status" value="1"/>
</dbReference>
<dbReference type="PANTHER" id="PTHR11766:SF0">
    <property type="entry name" value="TYROSINE--TRNA LIGASE, MITOCHONDRIAL"/>
    <property type="match status" value="1"/>
</dbReference>
<dbReference type="PANTHER" id="PTHR11766">
    <property type="entry name" value="TYROSYL-TRNA SYNTHETASE"/>
    <property type="match status" value="1"/>
</dbReference>
<dbReference type="Pfam" id="PF22421">
    <property type="entry name" value="SYY_C-terminal"/>
    <property type="match status" value="1"/>
</dbReference>
<dbReference type="Pfam" id="PF00579">
    <property type="entry name" value="tRNA-synt_1b"/>
    <property type="match status" value="1"/>
</dbReference>
<dbReference type="PRINTS" id="PR01040">
    <property type="entry name" value="TRNASYNTHTYR"/>
</dbReference>
<dbReference type="SUPFAM" id="SSF55174">
    <property type="entry name" value="Alpha-L RNA-binding motif"/>
    <property type="match status" value="1"/>
</dbReference>
<dbReference type="SUPFAM" id="SSF52374">
    <property type="entry name" value="Nucleotidylyl transferase"/>
    <property type="match status" value="1"/>
</dbReference>
<dbReference type="PROSITE" id="PS50889">
    <property type="entry name" value="S4"/>
    <property type="match status" value="1"/>
</dbReference>
<gene>
    <name evidence="1" type="primary">tyrS</name>
    <name type="ordered locus">Dalk_3621</name>
</gene>
<evidence type="ECO:0000255" key="1">
    <source>
        <dbReference type="HAMAP-Rule" id="MF_02006"/>
    </source>
</evidence>
<protein>
    <recommendedName>
        <fullName evidence="1">Tyrosine--tRNA ligase</fullName>
        <ecNumber evidence="1">6.1.1.1</ecNumber>
    </recommendedName>
    <alternativeName>
        <fullName evidence="1">Tyrosyl-tRNA synthetase</fullName>
        <shortName evidence="1">TyrRS</shortName>
    </alternativeName>
</protein>
<accession>B8FGS9</accession>